<sequence length="486" mass="53700">MIRRVLPHGLGRGLLTRRPGTRRGGFSLDWDGKVSEIKKKIKSILPGTPCDVLPDTSHLPPEHSDVVVVGGGVLGLSVAYWLKQLENRRGGMRVLVVERDHTYSQASTGLSVGGICQQFSLPENIQLSLFSASFLRNINEYLAVTNAPPLDLQFNPSGYLLLASEKDAAAMESNVKVQKQEGAKVCLMSPDQLRNKFPWINTEGVALASYGMENEGWFDPWCLLHGLRQKLMSMGVFFCQGEVTRFVTSSQRMMTTDDEMVTLKSIHEVHVKMDHSLEYQPVECAIVINAAGAWSAQIAALAGIGKGPPGTLQGTKLPVEPRKRYVYVWHCPQGPGLETPLVADTSGAYFRREGLGSNYLGGRSPAEEEEPDPANLEVDHDFFQEKVWPHLALRVPAFETLKVQTAWAGYYDYNTFDQNGVVGPHPLVVNMYFATGFSGHGLQQAPGVGRAVAEMILEGSFQTIDLSPFLFNRFYLGEKTQENNIM</sequence>
<dbReference type="EC" id="1.-.-.-"/>
<dbReference type="EMBL" id="AB169734">
    <property type="protein sequence ID" value="BAE01815.1"/>
    <property type="molecule type" value="mRNA"/>
</dbReference>
<dbReference type="RefSeq" id="XP_005580173.2">
    <property type="nucleotide sequence ID" value="XM_005580116.4"/>
</dbReference>
<dbReference type="SMR" id="Q4R510"/>
<dbReference type="STRING" id="9541.ENSMFAP00000017740"/>
<dbReference type="GeneID" id="101925787"/>
<dbReference type="KEGG" id="mcf:101925787"/>
<dbReference type="CTD" id="55572"/>
<dbReference type="VEuPathDB" id="HostDB:ENSMFAG00000031974"/>
<dbReference type="eggNOG" id="KOG2853">
    <property type="taxonomic scope" value="Eukaryota"/>
</dbReference>
<dbReference type="OrthoDB" id="11466at314294"/>
<dbReference type="Proteomes" id="UP000233100">
    <property type="component" value="Chromosome 14"/>
</dbReference>
<dbReference type="GO" id="GO:0005743">
    <property type="term" value="C:mitochondrial inner membrane"/>
    <property type="evidence" value="ECO:0000250"/>
    <property type="project" value="UniProtKB"/>
</dbReference>
<dbReference type="GO" id="GO:0016491">
    <property type="term" value="F:oxidoreductase activity"/>
    <property type="evidence" value="ECO:0007669"/>
    <property type="project" value="UniProtKB-KW"/>
</dbReference>
<dbReference type="GO" id="GO:0032981">
    <property type="term" value="P:mitochondrial respiratory chain complex I assembly"/>
    <property type="evidence" value="ECO:0000250"/>
    <property type="project" value="UniProtKB"/>
</dbReference>
<dbReference type="FunFam" id="3.30.9.10:FF:000155">
    <property type="entry name" value="FAD-dependent oxidoreductase domain-containing 1"/>
    <property type="match status" value="1"/>
</dbReference>
<dbReference type="Gene3D" id="3.30.9.10">
    <property type="entry name" value="D-Amino Acid Oxidase, subunit A, domain 2"/>
    <property type="match status" value="1"/>
</dbReference>
<dbReference type="Gene3D" id="3.50.50.60">
    <property type="entry name" value="FAD/NAD(P)-binding domain"/>
    <property type="match status" value="1"/>
</dbReference>
<dbReference type="InterPro" id="IPR006076">
    <property type="entry name" value="FAD-dep_OxRdtase"/>
</dbReference>
<dbReference type="InterPro" id="IPR036188">
    <property type="entry name" value="FAD/NAD-bd_sf"/>
</dbReference>
<dbReference type="PANTHER" id="PTHR13847:SF287">
    <property type="entry name" value="FAD-DEPENDENT OXIDOREDUCTASE DOMAIN-CONTAINING PROTEIN 1"/>
    <property type="match status" value="1"/>
</dbReference>
<dbReference type="PANTHER" id="PTHR13847">
    <property type="entry name" value="SARCOSINE DEHYDROGENASE-RELATED"/>
    <property type="match status" value="1"/>
</dbReference>
<dbReference type="Pfam" id="PF01266">
    <property type="entry name" value="DAO"/>
    <property type="match status" value="1"/>
</dbReference>
<dbReference type="SUPFAM" id="SSF51905">
    <property type="entry name" value="FAD/NAD(P)-binding domain"/>
    <property type="match status" value="1"/>
</dbReference>
<reference key="1">
    <citation type="submission" date="2005-06" db="EMBL/GenBank/DDBJ databases">
        <title>DNA sequences of macaque genes expressed in brain or testis and its evolutionary implications.</title>
        <authorList>
            <consortium name="International consortium for macaque cDNA sequencing and analysis"/>
        </authorList>
    </citation>
    <scope>NUCLEOTIDE SEQUENCE [LARGE SCALE MRNA]</scope>
    <source>
        <tissue>Frontal cortex</tissue>
    </source>
</reference>
<evidence type="ECO:0000250" key="1"/>
<evidence type="ECO:0000250" key="2">
    <source>
        <dbReference type="UniProtKB" id="Q96CU9"/>
    </source>
</evidence>
<evidence type="ECO:0000255" key="3"/>
<organism>
    <name type="scientific">Macaca fascicularis</name>
    <name type="common">Crab-eating macaque</name>
    <name type="synonym">Cynomolgus monkey</name>
    <dbReference type="NCBI Taxonomy" id="9541"/>
    <lineage>
        <taxon>Eukaryota</taxon>
        <taxon>Metazoa</taxon>
        <taxon>Chordata</taxon>
        <taxon>Craniata</taxon>
        <taxon>Vertebrata</taxon>
        <taxon>Euteleostomi</taxon>
        <taxon>Mammalia</taxon>
        <taxon>Eutheria</taxon>
        <taxon>Euarchontoglires</taxon>
        <taxon>Primates</taxon>
        <taxon>Haplorrhini</taxon>
        <taxon>Catarrhini</taxon>
        <taxon>Cercopithecidae</taxon>
        <taxon>Cercopithecinae</taxon>
        <taxon>Macaca</taxon>
    </lineage>
</organism>
<gene>
    <name type="primary">FOXRED1</name>
    <name type="ORF">QflA-14174</name>
</gene>
<name>FXRD1_MACFA</name>
<accession>Q4R510</accession>
<protein>
    <recommendedName>
        <fullName>FAD-dependent oxidoreductase domain-containing protein 1</fullName>
        <ecNumber>1.-.-.-</ecNumber>
    </recommendedName>
</protein>
<comment type="function">
    <text evidence="2">Required for the assembly of the mitochondrial membrane respiratory chain NADH dehydrogenase (Complex I). Involved in mid-late stages of complex I assembly.</text>
</comment>
<comment type="cofactor">
    <cofactor evidence="1">
        <name>FAD</name>
        <dbReference type="ChEBI" id="CHEBI:57692"/>
    </cofactor>
</comment>
<comment type="subunit">
    <text evidence="2">Associates with components of the mitochondrial respiratory chain complex I.</text>
</comment>
<comment type="subcellular location">
    <subcellularLocation>
        <location evidence="2">Mitochondrion inner membrane</location>
        <topology evidence="3">Single-pass membrane protein</topology>
    </subcellularLocation>
</comment>
<proteinExistence type="evidence at transcript level"/>
<keyword id="KW-0249">Electron transport</keyword>
<keyword id="KW-0274">FAD</keyword>
<keyword id="KW-0285">Flavoprotein</keyword>
<keyword id="KW-0472">Membrane</keyword>
<keyword id="KW-0496">Mitochondrion</keyword>
<keyword id="KW-0999">Mitochondrion inner membrane</keyword>
<keyword id="KW-0560">Oxidoreductase</keyword>
<keyword id="KW-1185">Reference proteome</keyword>
<keyword id="KW-0679">Respiratory chain</keyword>
<keyword id="KW-0812">Transmembrane</keyword>
<keyword id="KW-1133">Transmembrane helix</keyword>
<keyword id="KW-0813">Transport</keyword>
<feature type="chain" id="PRO_0000274143" description="FAD-dependent oxidoreductase domain-containing protein 1">
    <location>
        <begin position="1"/>
        <end position="486"/>
    </location>
</feature>
<feature type="transmembrane region" description="Helical" evidence="3">
    <location>
        <begin position="66"/>
        <end position="86"/>
    </location>
</feature>